<evidence type="ECO:0000255" key="1">
    <source>
        <dbReference type="HAMAP-Rule" id="MF_01318"/>
    </source>
</evidence>
<evidence type="ECO:0000305" key="2"/>
<reference key="1">
    <citation type="journal article" date="2005" name="J. Bacteriol.">
        <title>Complete genome sequence and analysis of the multiresistant nosocomial pathogen Corynebacterium jeikeium K411, a lipid-requiring bacterium of the human skin flora.</title>
        <authorList>
            <person name="Tauch A."/>
            <person name="Kaiser O."/>
            <person name="Hain T."/>
            <person name="Goesmann A."/>
            <person name="Weisshaar B."/>
            <person name="Albersmeier A."/>
            <person name="Bekel T."/>
            <person name="Bischoff N."/>
            <person name="Brune I."/>
            <person name="Chakraborty T."/>
            <person name="Kalinowski J."/>
            <person name="Meyer F."/>
            <person name="Rupp O."/>
            <person name="Schneiker S."/>
            <person name="Viehoever P."/>
            <person name="Puehler A."/>
        </authorList>
    </citation>
    <scope>NUCLEOTIDE SEQUENCE [LARGE SCALE GENOMIC DNA]</scope>
    <source>
        <strain>K411</strain>
    </source>
</reference>
<feature type="chain" id="PRO_0000230603" description="Large ribosomal subunit protein uL1">
    <location>
        <begin position="1"/>
        <end position="236"/>
    </location>
</feature>
<accession>Q4JT18</accession>
<protein>
    <recommendedName>
        <fullName evidence="1">Large ribosomal subunit protein uL1</fullName>
    </recommendedName>
    <alternativeName>
        <fullName evidence="2">50S ribosomal protein L1</fullName>
    </alternativeName>
</protein>
<comment type="function">
    <text evidence="1">Binds directly to 23S rRNA. The L1 stalk is quite mobile in the ribosome, and is involved in E site tRNA release.</text>
</comment>
<comment type="function">
    <text evidence="1">Protein L1 is also a translational repressor protein, it controls the translation of the L11 operon by binding to its mRNA.</text>
</comment>
<comment type="subunit">
    <text evidence="1">Part of the 50S ribosomal subunit.</text>
</comment>
<comment type="similarity">
    <text evidence="1">Belongs to the universal ribosomal protein uL1 family.</text>
</comment>
<keyword id="KW-1185">Reference proteome</keyword>
<keyword id="KW-0678">Repressor</keyword>
<keyword id="KW-0687">Ribonucleoprotein</keyword>
<keyword id="KW-0689">Ribosomal protein</keyword>
<keyword id="KW-0694">RNA-binding</keyword>
<keyword id="KW-0699">rRNA-binding</keyword>
<keyword id="KW-0810">Translation regulation</keyword>
<keyword id="KW-0820">tRNA-binding</keyword>
<organism>
    <name type="scientific">Corynebacterium jeikeium (strain K411)</name>
    <dbReference type="NCBI Taxonomy" id="306537"/>
    <lineage>
        <taxon>Bacteria</taxon>
        <taxon>Bacillati</taxon>
        <taxon>Actinomycetota</taxon>
        <taxon>Actinomycetes</taxon>
        <taxon>Mycobacteriales</taxon>
        <taxon>Corynebacteriaceae</taxon>
        <taxon>Corynebacterium</taxon>
    </lineage>
</organism>
<sequence length="236" mass="24845">MSKTSKAYRAAAEKIDAGRLYTPLAAAKAVKETSSKNFDATVDVAIRLGVDPRKADQLVRGTVSLPNGTGKEVRVVVFAEGPNATAAEEAGADVVGTAELIEKIQGGWTDFDAAIATPDQMAKVGRVARVLGPRGLMPNPKTGTVTTDVAKAVAEIKGGKISFRVDKAANLHAILGKASFTEKQLAENYGALIDELLRLKPSSSKGRYFKKVTMSSTNGPGVPVDNTIVKDFTEEA</sequence>
<gene>
    <name evidence="1" type="primary">rplA</name>
    <name type="ordered locus">jk1859</name>
</gene>
<proteinExistence type="inferred from homology"/>
<name>RL1_CORJK</name>
<dbReference type="EMBL" id="CR931997">
    <property type="protein sequence ID" value="CAI38039.1"/>
    <property type="molecule type" value="Genomic_DNA"/>
</dbReference>
<dbReference type="RefSeq" id="WP_005292043.1">
    <property type="nucleotide sequence ID" value="NC_007164.1"/>
</dbReference>
<dbReference type="SMR" id="Q4JT18"/>
<dbReference type="STRING" id="306537.jk1859"/>
<dbReference type="GeneID" id="92739483"/>
<dbReference type="KEGG" id="cjk:jk1859"/>
<dbReference type="eggNOG" id="COG0081">
    <property type="taxonomic scope" value="Bacteria"/>
</dbReference>
<dbReference type="HOGENOM" id="CLU_062853_0_0_11"/>
<dbReference type="OrthoDB" id="9803740at2"/>
<dbReference type="Proteomes" id="UP000000545">
    <property type="component" value="Chromosome"/>
</dbReference>
<dbReference type="GO" id="GO:0015934">
    <property type="term" value="C:large ribosomal subunit"/>
    <property type="evidence" value="ECO:0007669"/>
    <property type="project" value="InterPro"/>
</dbReference>
<dbReference type="GO" id="GO:0019843">
    <property type="term" value="F:rRNA binding"/>
    <property type="evidence" value="ECO:0007669"/>
    <property type="project" value="UniProtKB-UniRule"/>
</dbReference>
<dbReference type="GO" id="GO:0003735">
    <property type="term" value="F:structural constituent of ribosome"/>
    <property type="evidence" value="ECO:0007669"/>
    <property type="project" value="InterPro"/>
</dbReference>
<dbReference type="GO" id="GO:0000049">
    <property type="term" value="F:tRNA binding"/>
    <property type="evidence" value="ECO:0007669"/>
    <property type="project" value="UniProtKB-KW"/>
</dbReference>
<dbReference type="GO" id="GO:0006417">
    <property type="term" value="P:regulation of translation"/>
    <property type="evidence" value="ECO:0007669"/>
    <property type="project" value="UniProtKB-KW"/>
</dbReference>
<dbReference type="GO" id="GO:0006412">
    <property type="term" value="P:translation"/>
    <property type="evidence" value="ECO:0007669"/>
    <property type="project" value="UniProtKB-UniRule"/>
</dbReference>
<dbReference type="CDD" id="cd00403">
    <property type="entry name" value="Ribosomal_L1"/>
    <property type="match status" value="1"/>
</dbReference>
<dbReference type="FunFam" id="3.40.50.790:FF:000001">
    <property type="entry name" value="50S ribosomal protein L1"/>
    <property type="match status" value="1"/>
</dbReference>
<dbReference type="Gene3D" id="3.30.190.20">
    <property type="match status" value="1"/>
</dbReference>
<dbReference type="Gene3D" id="3.40.50.790">
    <property type="match status" value="1"/>
</dbReference>
<dbReference type="HAMAP" id="MF_01318_B">
    <property type="entry name" value="Ribosomal_uL1_B"/>
    <property type="match status" value="1"/>
</dbReference>
<dbReference type="InterPro" id="IPR005878">
    <property type="entry name" value="Ribosom_uL1_bac-type"/>
</dbReference>
<dbReference type="InterPro" id="IPR002143">
    <property type="entry name" value="Ribosomal_uL1"/>
</dbReference>
<dbReference type="InterPro" id="IPR023674">
    <property type="entry name" value="Ribosomal_uL1-like"/>
</dbReference>
<dbReference type="InterPro" id="IPR028364">
    <property type="entry name" value="Ribosomal_uL1/biogenesis"/>
</dbReference>
<dbReference type="InterPro" id="IPR016095">
    <property type="entry name" value="Ribosomal_uL1_3-a/b-sand"/>
</dbReference>
<dbReference type="InterPro" id="IPR023673">
    <property type="entry name" value="Ribosomal_uL1_CS"/>
</dbReference>
<dbReference type="NCBIfam" id="TIGR01169">
    <property type="entry name" value="rplA_bact"/>
    <property type="match status" value="1"/>
</dbReference>
<dbReference type="PANTHER" id="PTHR36427">
    <property type="entry name" value="54S RIBOSOMAL PROTEIN L1, MITOCHONDRIAL"/>
    <property type="match status" value="1"/>
</dbReference>
<dbReference type="PANTHER" id="PTHR36427:SF3">
    <property type="entry name" value="LARGE RIBOSOMAL SUBUNIT PROTEIN UL1M"/>
    <property type="match status" value="1"/>
</dbReference>
<dbReference type="Pfam" id="PF00687">
    <property type="entry name" value="Ribosomal_L1"/>
    <property type="match status" value="1"/>
</dbReference>
<dbReference type="PIRSF" id="PIRSF002155">
    <property type="entry name" value="Ribosomal_L1"/>
    <property type="match status" value="1"/>
</dbReference>
<dbReference type="SUPFAM" id="SSF56808">
    <property type="entry name" value="Ribosomal protein L1"/>
    <property type="match status" value="1"/>
</dbReference>
<dbReference type="PROSITE" id="PS01199">
    <property type="entry name" value="RIBOSOMAL_L1"/>
    <property type="match status" value="1"/>
</dbReference>